<evidence type="ECO:0000255" key="1">
    <source>
        <dbReference type="HAMAP-Rule" id="MF_00117"/>
    </source>
</evidence>
<name>HSLO_THEM4</name>
<feature type="chain" id="PRO_1000015590" description="33 kDa chaperonin">
    <location>
        <begin position="1"/>
        <end position="287"/>
    </location>
</feature>
<feature type="disulfide bond" description="Redox-active" evidence="1">
    <location>
        <begin position="231"/>
        <end position="233"/>
    </location>
</feature>
<feature type="disulfide bond" description="Redox-active" evidence="1">
    <location>
        <begin position="264"/>
        <end position="267"/>
    </location>
</feature>
<dbReference type="EMBL" id="CP000716">
    <property type="protein sequence ID" value="ABR30174.1"/>
    <property type="molecule type" value="Genomic_DNA"/>
</dbReference>
<dbReference type="SMR" id="A6LJS3"/>
<dbReference type="STRING" id="391009.Tmel_0302"/>
<dbReference type="KEGG" id="tme:Tmel_0302"/>
<dbReference type="eggNOG" id="COG1281">
    <property type="taxonomic scope" value="Bacteria"/>
</dbReference>
<dbReference type="HOGENOM" id="CLU_054493_1_0_0"/>
<dbReference type="OrthoDB" id="9776534at2"/>
<dbReference type="Proteomes" id="UP000001110">
    <property type="component" value="Chromosome"/>
</dbReference>
<dbReference type="GO" id="GO:0005737">
    <property type="term" value="C:cytoplasm"/>
    <property type="evidence" value="ECO:0007669"/>
    <property type="project" value="UniProtKB-SubCell"/>
</dbReference>
<dbReference type="GO" id="GO:0044183">
    <property type="term" value="F:protein folding chaperone"/>
    <property type="evidence" value="ECO:0007669"/>
    <property type="project" value="TreeGrafter"/>
</dbReference>
<dbReference type="GO" id="GO:0051082">
    <property type="term" value="F:unfolded protein binding"/>
    <property type="evidence" value="ECO:0007669"/>
    <property type="project" value="UniProtKB-UniRule"/>
</dbReference>
<dbReference type="GO" id="GO:0042026">
    <property type="term" value="P:protein refolding"/>
    <property type="evidence" value="ECO:0007669"/>
    <property type="project" value="TreeGrafter"/>
</dbReference>
<dbReference type="CDD" id="cd00498">
    <property type="entry name" value="Hsp33"/>
    <property type="match status" value="1"/>
</dbReference>
<dbReference type="Gene3D" id="3.55.30.10">
    <property type="entry name" value="Hsp33 domain"/>
    <property type="match status" value="1"/>
</dbReference>
<dbReference type="Gene3D" id="3.90.1280.10">
    <property type="entry name" value="HSP33 redox switch-like"/>
    <property type="match status" value="1"/>
</dbReference>
<dbReference type="HAMAP" id="MF_00117">
    <property type="entry name" value="HslO"/>
    <property type="match status" value="1"/>
</dbReference>
<dbReference type="InterPro" id="IPR000397">
    <property type="entry name" value="Heat_shock_Hsp33"/>
</dbReference>
<dbReference type="InterPro" id="IPR016154">
    <property type="entry name" value="Heat_shock_Hsp33_C"/>
</dbReference>
<dbReference type="InterPro" id="IPR016153">
    <property type="entry name" value="Heat_shock_Hsp33_N"/>
</dbReference>
<dbReference type="NCBIfam" id="NF001033">
    <property type="entry name" value="PRK00114.1"/>
    <property type="match status" value="1"/>
</dbReference>
<dbReference type="PANTHER" id="PTHR30111">
    <property type="entry name" value="33 KDA CHAPERONIN"/>
    <property type="match status" value="1"/>
</dbReference>
<dbReference type="PANTHER" id="PTHR30111:SF1">
    <property type="entry name" value="33 KDA CHAPERONIN"/>
    <property type="match status" value="1"/>
</dbReference>
<dbReference type="Pfam" id="PF01430">
    <property type="entry name" value="HSP33"/>
    <property type="match status" value="1"/>
</dbReference>
<dbReference type="PIRSF" id="PIRSF005261">
    <property type="entry name" value="Heat_shock_Hsp33"/>
    <property type="match status" value="1"/>
</dbReference>
<dbReference type="SUPFAM" id="SSF64397">
    <property type="entry name" value="Hsp33 domain"/>
    <property type="match status" value="1"/>
</dbReference>
<dbReference type="SUPFAM" id="SSF118352">
    <property type="entry name" value="HSP33 redox switch-like"/>
    <property type="match status" value="1"/>
</dbReference>
<sequence length="287" mass="32091">MVINGIAYKALVRFSVIDSTDLVKTATKKHNLSPITSVALGRLLTGIALMVPWLSKNDTLTYIIEGSNKIKYIAAQSKNNGNVRGYILPKIVDTITNEKGKFDLKSAIGNGTLKVVRDLGLKTPYVTPIKLISGEIAEDLTYYFTISEQIPSAIALGVLVDKNGIKRAGGIIIQILDQSLPKKDITEIEKKFKEITPITNFLEKHTPIDALKHIFGKKIEKTETHEINFRCSCSHQKALESLKLLKVDELKEIIIKNEIVEVSCKWCSTTYKIKPEEVKKILEEKNK</sequence>
<proteinExistence type="inferred from homology"/>
<accession>A6LJS3</accession>
<protein>
    <recommendedName>
        <fullName evidence="1">33 kDa chaperonin</fullName>
    </recommendedName>
    <alternativeName>
        <fullName evidence="1">Heat shock protein 33 homolog</fullName>
        <shortName evidence="1">HSP33</shortName>
    </alternativeName>
</protein>
<organism>
    <name type="scientific">Thermosipho melanesiensis (strain DSM 12029 / CIP 104789 / BI429)</name>
    <dbReference type="NCBI Taxonomy" id="391009"/>
    <lineage>
        <taxon>Bacteria</taxon>
        <taxon>Thermotogati</taxon>
        <taxon>Thermotogota</taxon>
        <taxon>Thermotogae</taxon>
        <taxon>Thermotogales</taxon>
        <taxon>Fervidobacteriaceae</taxon>
        <taxon>Thermosipho</taxon>
    </lineage>
</organism>
<comment type="function">
    <text evidence="1">Redox regulated molecular chaperone. Protects both thermally unfolding and oxidatively damaged proteins from irreversible aggregation. Plays an important role in the bacterial defense system toward oxidative stress.</text>
</comment>
<comment type="subcellular location">
    <subcellularLocation>
        <location evidence="1">Cytoplasm</location>
    </subcellularLocation>
</comment>
<comment type="PTM">
    <text evidence="1">Under oxidizing conditions two disulfide bonds are formed involving the reactive cysteines. Under reducing conditions zinc is bound to the reactive cysteines and the protein is inactive.</text>
</comment>
<comment type="similarity">
    <text evidence="1">Belongs to the HSP33 family.</text>
</comment>
<reference key="1">
    <citation type="submission" date="2007-05" db="EMBL/GenBank/DDBJ databases">
        <title>Complete sequence of Thermosipho melanesiensis BI429.</title>
        <authorList>
            <consortium name="US DOE Joint Genome Institute"/>
            <person name="Copeland A."/>
            <person name="Lucas S."/>
            <person name="Lapidus A."/>
            <person name="Barry K."/>
            <person name="Glavina del Rio T."/>
            <person name="Dalin E."/>
            <person name="Tice H."/>
            <person name="Pitluck S."/>
            <person name="Chertkov O."/>
            <person name="Brettin T."/>
            <person name="Bruce D."/>
            <person name="Detter J.C."/>
            <person name="Han C."/>
            <person name="Schmutz J."/>
            <person name="Larimer F."/>
            <person name="Land M."/>
            <person name="Hauser L."/>
            <person name="Kyrpides N."/>
            <person name="Mikhailova N."/>
            <person name="Nelson K."/>
            <person name="Gogarten J.P."/>
            <person name="Noll K."/>
            <person name="Richardson P."/>
        </authorList>
    </citation>
    <scope>NUCLEOTIDE SEQUENCE [LARGE SCALE GENOMIC DNA]</scope>
    <source>
        <strain>DSM 12029 / CIP 104789 / BI429</strain>
    </source>
</reference>
<keyword id="KW-0143">Chaperone</keyword>
<keyword id="KW-0963">Cytoplasm</keyword>
<keyword id="KW-1015">Disulfide bond</keyword>
<keyword id="KW-0676">Redox-active center</keyword>
<keyword id="KW-0862">Zinc</keyword>
<gene>
    <name evidence="1" type="primary">hslO</name>
    <name type="ordered locus">Tmel_0302</name>
</gene>